<keyword id="KW-0963">Cytoplasm</keyword>
<keyword id="KW-0501">Molybdenum cofactor biosynthesis</keyword>
<proteinExistence type="inferred from homology"/>
<feature type="chain" id="PRO_1000020822" description="Sulfur carrier protein FdhD">
    <location>
        <begin position="1"/>
        <end position="265"/>
    </location>
</feature>
<feature type="active site" description="Cysteine persulfide intermediate" evidence="1">
    <location>
        <position position="107"/>
    </location>
</feature>
<protein>
    <recommendedName>
        <fullName evidence="1">Sulfur carrier protein FdhD</fullName>
    </recommendedName>
</protein>
<gene>
    <name evidence="1" type="primary">fdhD</name>
    <name type="ordered locus">SAHV_2264</name>
</gene>
<name>FDHD_STAA1</name>
<sequence>MNKDVSLGQPIVRYEDGKLFNTTDQYVTEFPLTIMVNGEEFATVICSPTNLEELVIGFLASEGAILKRDELKSVLIDDSKGFAHVELNKDLGDRFQYSTKRMIASCCGKSREFYFQNDAAIAKTSMSKITLTPIQIINMMTRLQSASHIYQETGGLHNAAISDGLTFFVHRQDIGRHNALDKLYGFCIQRHITVRDKVLIFSGRISSEILIKAAKIGVGVILSKSAPTTLAVTLANDLNITAVGFIRNGGFNIYSHPERIIDSEQ</sequence>
<reference key="1">
    <citation type="journal article" date="2008" name="Antimicrob. Agents Chemother.">
        <title>Mutated response regulator graR is responsible for phenotypic conversion of Staphylococcus aureus from heterogeneous vancomycin-intermediate resistance to vancomycin-intermediate resistance.</title>
        <authorList>
            <person name="Neoh H.-M."/>
            <person name="Cui L."/>
            <person name="Yuzawa H."/>
            <person name="Takeuchi F."/>
            <person name="Matsuo M."/>
            <person name="Hiramatsu K."/>
        </authorList>
    </citation>
    <scope>NUCLEOTIDE SEQUENCE [LARGE SCALE GENOMIC DNA]</scope>
    <source>
        <strain>Mu3 / ATCC 700698</strain>
    </source>
</reference>
<dbReference type="EMBL" id="AP009324">
    <property type="protein sequence ID" value="BAF79147.1"/>
    <property type="molecule type" value="Genomic_DNA"/>
</dbReference>
<dbReference type="RefSeq" id="WP_001030823.1">
    <property type="nucleotide sequence ID" value="NC_009782.1"/>
</dbReference>
<dbReference type="SMR" id="A7X5K8"/>
<dbReference type="KEGG" id="saw:SAHV_2264"/>
<dbReference type="HOGENOM" id="CLU_056887_4_1_9"/>
<dbReference type="GO" id="GO:0005737">
    <property type="term" value="C:cytoplasm"/>
    <property type="evidence" value="ECO:0007669"/>
    <property type="project" value="UniProtKB-SubCell"/>
</dbReference>
<dbReference type="GO" id="GO:0097163">
    <property type="term" value="F:sulfur carrier activity"/>
    <property type="evidence" value="ECO:0007669"/>
    <property type="project" value="UniProtKB-UniRule"/>
</dbReference>
<dbReference type="GO" id="GO:0016783">
    <property type="term" value="F:sulfurtransferase activity"/>
    <property type="evidence" value="ECO:0007669"/>
    <property type="project" value="InterPro"/>
</dbReference>
<dbReference type="GO" id="GO:0006777">
    <property type="term" value="P:Mo-molybdopterin cofactor biosynthetic process"/>
    <property type="evidence" value="ECO:0007669"/>
    <property type="project" value="UniProtKB-UniRule"/>
</dbReference>
<dbReference type="Gene3D" id="3.10.20.10">
    <property type="match status" value="1"/>
</dbReference>
<dbReference type="Gene3D" id="3.40.140.10">
    <property type="entry name" value="Cytidine Deaminase, domain 2"/>
    <property type="match status" value="1"/>
</dbReference>
<dbReference type="HAMAP" id="MF_00187">
    <property type="entry name" value="FdhD"/>
    <property type="match status" value="1"/>
</dbReference>
<dbReference type="InterPro" id="IPR016193">
    <property type="entry name" value="Cytidine_deaminase-like"/>
</dbReference>
<dbReference type="InterPro" id="IPR003786">
    <property type="entry name" value="FdhD"/>
</dbReference>
<dbReference type="NCBIfam" id="TIGR00129">
    <property type="entry name" value="fdhD_narQ"/>
    <property type="match status" value="1"/>
</dbReference>
<dbReference type="PANTHER" id="PTHR30592">
    <property type="entry name" value="FORMATE DEHYDROGENASE"/>
    <property type="match status" value="1"/>
</dbReference>
<dbReference type="PANTHER" id="PTHR30592:SF1">
    <property type="entry name" value="SULFUR CARRIER PROTEIN FDHD"/>
    <property type="match status" value="1"/>
</dbReference>
<dbReference type="Pfam" id="PF02634">
    <property type="entry name" value="FdhD-NarQ"/>
    <property type="match status" value="1"/>
</dbReference>
<dbReference type="PIRSF" id="PIRSF015626">
    <property type="entry name" value="FdhD"/>
    <property type="match status" value="1"/>
</dbReference>
<dbReference type="SUPFAM" id="SSF53927">
    <property type="entry name" value="Cytidine deaminase-like"/>
    <property type="match status" value="1"/>
</dbReference>
<evidence type="ECO:0000255" key="1">
    <source>
        <dbReference type="HAMAP-Rule" id="MF_00187"/>
    </source>
</evidence>
<organism>
    <name type="scientific">Staphylococcus aureus (strain Mu3 / ATCC 700698)</name>
    <dbReference type="NCBI Taxonomy" id="418127"/>
    <lineage>
        <taxon>Bacteria</taxon>
        <taxon>Bacillati</taxon>
        <taxon>Bacillota</taxon>
        <taxon>Bacilli</taxon>
        <taxon>Bacillales</taxon>
        <taxon>Staphylococcaceae</taxon>
        <taxon>Staphylococcus</taxon>
    </lineage>
</organism>
<comment type="function">
    <text evidence="1">Required for formate dehydrogenase (FDH) activity. Acts as a sulfur carrier protein that transfers sulfur from IscS to the molybdenum cofactor prior to its insertion into FDH.</text>
</comment>
<comment type="subcellular location">
    <subcellularLocation>
        <location evidence="1">Cytoplasm</location>
    </subcellularLocation>
</comment>
<comment type="similarity">
    <text evidence="1">Belongs to the FdhD family.</text>
</comment>
<accession>A7X5K8</accession>